<gene>
    <name type="primary">U55B</name>
</gene>
<protein>
    <recommendedName>
        <fullName>Uncharacterized protein U55B</fullName>
    </recommendedName>
</protein>
<feature type="chain" id="PRO_0000116296" description="Uncharacterized protein U55B">
    <location>
        <begin position="1"/>
        <end position="430"/>
    </location>
</feature>
<organism>
    <name type="scientific">Human herpesvirus 7 (strain JI)</name>
    <name type="common">HHV-7</name>
    <name type="synonym">Human T lymphotropic virus</name>
    <dbReference type="NCBI Taxonomy" id="57278"/>
    <lineage>
        <taxon>Viruses</taxon>
        <taxon>Duplodnaviria</taxon>
        <taxon>Heunggongvirae</taxon>
        <taxon>Peploviricota</taxon>
        <taxon>Herviviricetes</taxon>
        <taxon>Herpesvirales</taxon>
        <taxon>Orthoherpesviridae</taxon>
        <taxon>Betaherpesvirinae</taxon>
        <taxon>Roseolovirus</taxon>
        <taxon>Roseolovirus humanbeta7</taxon>
        <taxon>Human betaherpesvirus 7</taxon>
    </lineage>
</organism>
<accession>P52518</accession>
<organismHost>
    <name type="scientific">Homo sapiens</name>
    <name type="common">Human</name>
    <dbReference type="NCBI Taxonomy" id="9606"/>
</organismHost>
<sequence>MSLATSDILKYVQIEIPYKEEFQGKDNVTLLFDEYVQSKTEPVLLLSAEINSRNSDSFFSARPLMEEQQLKLHLKNLNRHIYPSKVLFFGFPLLKINSSIVIIPNHDVKEQEQMGVFPSLIRFKNEKVIVTQTPHKVNEITVTMFNIEWKLSTYQRSIERTPGHPLTTLCTVCSVNINNLPFWFHDVRSGSDFPTCKVFSISDPTVSVLKMIFSPPLLEIYLRCYTEVTKNNTYMVPNDCMLKLGFVNEIIPNEISLTVHMHYFKICSDKRKIDVFFQDTMLFDEGETKKLHFKGTFYNFNANALYVPDPNSKVQSIASFWSPTTSFTTKVTSDRSQRVTTNDIIGSIYFIPTHILRTKFDPNYTDSFAAEIELNSEDPESDALYFLADKIFISDLPDLILRKGWSARKKKLQSGSNINNHAPSKSRLRF</sequence>
<keyword id="KW-1185">Reference proteome</keyword>
<dbReference type="EMBL" id="U43400">
    <property type="protein sequence ID" value="AAC54718.1"/>
    <property type="molecule type" value="Genomic_DNA"/>
</dbReference>
<dbReference type="PIR" id="T41958">
    <property type="entry name" value="T41958"/>
</dbReference>
<dbReference type="RefSeq" id="YP_073797.1">
    <property type="nucleotide sequence ID" value="NC_001716.2"/>
</dbReference>
<dbReference type="DNASU" id="3289515"/>
<dbReference type="GeneID" id="3289515"/>
<dbReference type="KEGG" id="vg:3289515"/>
<dbReference type="Proteomes" id="UP000009246">
    <property type="component" value="Segment"/>
</dbReference>
<dbReference type="InterPro" id="IPR009479">
    <property type="entry name" value="Herpes_U55"/>
</dbReference>
<dbReference type="Pfam" id="PF06501">
    <property type="entry name" value="Herpes_U55"/>
    <property type="match status" value="1"/>
</dbReference>
<reference key="1">
    <citation type="journal article" date="1996" name="J. Virol.">
        <title>Determination and analysis of the complete nucleotide sequence of human herpesvirus.</title>
        <authorList>
            <person name="Nicholas J."/>
        </authorList>
    </citation>
    <scope>NUCLEOTIDE SEQUENCE [LARGE SCALE GENOMIC DNA]</scope>
</reference>
<proteinExistence type="predicted"/>
<name>V55B_HHV7J</name>